<keyword id="KW-0119">Carbohydrate metabolism</keyword>
<keyword id="KW-0961">Cell wall biogenesis/degradation</keyword>
<keyword id="KW-0325">Glycoprotein</keyword>
<keyword id="KW-0326">Glycosidase</keyword>
<keyword id="KW-0378">Hydrolase</keyword>
<keyword id="KW-0624">Polysaccharide degradation</keyword>
<keyword id="KW-1185">Reference proteome</keyword>
<keyword id="KW-0677">Repeat</keyword>
<keyword id="KW-0964">Secreted</keyword>
<keyword id="KW-0732">Signal</keyword>
<accession>A1DAU0</accession>
<evidence type="ECO:0000250" key="1"/>
<evidence type="ECO:0000255" key="2"/>
<evidence type="ECO:0000305" key="3"/>
<protein>
    <recommendedName>
        <fullName>Probable oligoxyloglucan-reducing end-specific xyloglucanase</fullName>
        <shortName>OREX</shortName>
        <ecNumber>3.2.1.150</ecNumber>
    </recommendedName>
</protein>
<sequence>MKFWLQQLGLAVLCASSAAARTAEHAYEFKSVAITGGGYITGIVGHPAEKNLLYARTDIGSTYRWEQELNKWIPLTDFLGPEDENLLGTESVAMDPTDPNRLYLAQGRYLSSNNSAFFVSNDRGATFTRYRAPFPMGANELGRNNGERLAVNPFKPNELWMGTRNAGLMKSSDRAKTWTNVTNFPDAAANGIGITFVIFDPQHEGTIYVGACIPGGLYYTTDGGKNWESIPGQPMQWDPSLLVYPNETQPQSAGPQPMKAVLASNGALYVTYADYPGPWGVAYGAVHVYNTTASIWTDITPNANNTSPKPYTPQAFPAGGYCGLSVAPDDPDTVVVVSLDRDPGPALDSMYLSRDGGKTWKDVSQLSTPPGSGGYWGHPIAEAALSNGTTVPWLSFNWGPQWGGYGAPSPVKGLTKFGWWMTAVLIDPSNPDHVLYGTGATIWATDTIAQADKNLAPKWYIQAQGIEETVTLAMISPREGAHLLSGAGDINGFRHDDLDTPQPMFGLPVFSNLNTLDWAGQRPEVIVRGGPCGHQYPDGCGQAAYSTDGGSEWTKFQTCIKGVNTSVHNPGVMTIDASGKYVVWTSAMYVVSPSVQAVTPPANDSGPYASSDWGKTWTSPRGLTVQTPYISADRVQPKTFYAFSGGVWYVSTDGGLSYDAFNATKLGLPAHTGAVPVVSVDRAGEIWLALGSNGVYHTTDFGKRWKRITHKGTVADLITVGAAAPGSTKPALFIRGSPGHPKKSDYGIYRSDDNGSTWDRVDDDDHRYGGFNLIQGDPRVYGRVYLGTGGRGLLYADIVPGQSDKEGNVPGTGGI</sequence>
<dbReference type="EC" id="3.2.1.150"/>
<dbReference type="EMBL" id="DS027694">
    <property type="protein sequence ID" value="EAW19980.1"/>
    <property type="molecule type" value="Genomic_DNA"/>
</dbReference>
<dbReference type="RefSeq" id="XP_001261877.1">
    <property type="nucleotide sequence ID" value="XM_001261876.1"/>
</dbReference>
<dbReference type="SMR" id="A1DAU0"/>
<dbReference type="STRING" id="331117.A1DAU0"/>
<dbReference type="GlyCosmos" id="A1DAU0">
    <property type="glycosylation" value="10 sites, No reported glycans"/>
</dbReference>
<dbReference type="EnsemblFungi" id="EAW19980">
    <property type="protein sequence ID" value="EAW19980"/>
    <property type="gene ID" value="NFIA_096000"/>
</dbReference>
<dbReference type="GeneID" id="4588332"/>
<dbReference type="KEGG" id="nfi:NFIA_096000"/>
<dbReference type="VEuPathDB" id="FungiDB:NFIA_096000"/>
<dbReference type="eggNOG" id="ENOG502SJCI">
    <property type="taxonomic scope" value="Eukaryota"/>
</dbReference>
<dbReference type="HOGENOM" id="CLU_004180_1_0_1"/>
<dbReference type="OMA" id="MGDQGGF"/>
<dbReference type="OrthoDB" id="2151161at2759"/>
<dbReference type="Proteomes" id="UP000006702">
    <property type="component" value="Unassembled WGS sequence"/>
</dbReference>
<dbReference type="GO" id="GO:0005576">
    <property type="term" value="C:extracellular region"/>
    <property type="evidence" value="ECO:0007669"/>
    <property type="project" value="UniProtKB-SubCell"/>
</dbReference>
<dbReference type="GO" id="GO:0033945">
    <property type="term" value="F:oligoxyloglucan reducing-end-specific cellobiohydrolase activity"/>
    <property type="evidence" value="ECO:0007669"/>
    <property type="project" value="UniProtKB-EC"/>
</dbReference>
<dbReference type="GO" id="GO:0071555">
    <property type="term" value="P:cell wall organization"/>
    <property type="evidence" value="ECO:0007669"/>
    <property type="project" value="UniProtKB-KW"/>
</dbReference>
<dbReference type="GO" id="GO:0000272">
    <property type="term" value="P:polysaccharide catabolic process"/>
    <property type="evidence" value="ECO:0007669"/>
    <property type="project" value="UniProtKB-KW"/>
</dbReference>
<dbReference type="GO" id="GO:0010411">
    <property type="term" value="P:xyloglucan metabolic process"/>
    <property type="evidence" value="ECO:0007669"/>
    <property type="project" value="TreeGrafter"/>
</dbReference>
<dbReference type="CDD" id="cd15482">
    <property type="entry name" value="Sialidase_non-viral"/>
    <property type="match status" value="2"/>
</dbReference>
<dbReference type="Gene3D" id="2.130.10.10">
    <property type="entry name" value="YVTN repeat-like/Quinoprotein amine dehydrogenase"/>
    <property type="match status" value="2"/>
</dbReference>
<dbReference type="InterPro" id="IPR002860">
    <property type="entry name" value="BNR_rpt"/>
</dbReference>
<dbReference type="InterPro" id="IPR015943">
    <property type="entry name" value="WD40/YVTN_repeat-like_dom_sf"/>
</dbReference>
<dbReference type="InterPro" id="IPR052025">
    <property type="entry name" value="Xyloglucanase_GH74"/>
</dbReference>
<dbReference type="PANTHER" id="PTHR43739:SF2">
    <property type="entry name" value="OLIGOXYLOGLUCAN-REDUCING END-SPECIFIC XYLOGLUCANASE-RELATED"/>
    <property type="match status" value="1"/>
</dbReference>
<dbReference type="PANTHER" id="PTHR43739">
    <property type="entry name" value="XYLOGLUCANASE (EUROFUNG)"/>
    <property type="match status" value="1"/>
</dbReference>
<dbReference type="Pfam" id="PF02012">
    <property type="entry name" value="BNR"/>
    <property type="match status" value="1"/>
</dbReference>
<dbReference type="SUPFAM" id="SSF110296">
    <property type="entry name" value="Oligoxyloglucan reducing end-specific cellobiohydrolase"/>
    <property type="match status" value="2"/>
</dbReference>
<name>XGCA_NEOFI</name>
<proteinExistence type="inferred from homology"/>
<organism>
    <name type="scientific">Neosartorya fischeri (strain ATCC 1020 / DSM 3700 / CBS 544.65 / FGSC A1164 / JCM 1740 / NRRL 181 / WB 181)</name>
    <name type="common">Aspergillus fischerianus</name>
    <dbReference type="NCBI Taxonomy" id="331117"/>
    <lineage>
        <taxon>Eukaryota</taxon>
        <taxon>Fungi</taxon>
        <taxon>Dikarya</taxon>
        <taxon>Ascomycota</taxon>
        <taxon>Pezizomycotina</taxon>
        <taxon>Eurotiomycetes</taxon>
        <taxon>Eurotiomycetidae</taxon>
        <taxon>Eurotiales</taxon>
        <taxon>Aspergillaceae</taxon>
        <taxon>Aspergillus</taxon>
        <taxon>Aspergillus subgen. Fumigati</taxon>
    </lineage>
</organism>
<reference key="1">
    <citation type="journal article" date="2008" name="PLoS Genet.">
        <title>Genomic islands in the pathogenic filamentous fungus Aspergillus fumigatus.</title>
        <authorList>
            <person name="Fedorova N.D."/>
            <person name="Khaldi N."/>
            <person name="Joardar V.S."/>
            <person name="Maiti R."/>
            <person name="Amedeo P."/>
            <person name="Anderson M.J."/>
            <person name="Crabtree J."/>
            <person name="Silva J.C."/>
            <person name="Badger J.H."/>
            <person name="Albarraq A."/>
            <person name="Angiuoli S."/>
            <person name="Bussey H."/>
            <person name="Bowyer P."/>
            <person name="Cotty P.J."/>
            <person name="Dyer P.S."/>
            <person name="Egan A."/>
            <person name="Galens K."/>
            <person name="Fraser-Liggett C.M."/>
            <person name="Haas B.J."/>
            <person name="Inman J.M."/>
            <person name="Kent R."/>
            <person name="Lemieux S."/>
            <person name="Malavazi I."/>
            <person name="Orvis J."/>
            <person name="Roemer T."/>
            <person name="Ronning C.M."/>
            <person name="Sundaram J.P."/>
            <person name="Sutton G."/>
            <person name="Turner G."/>
            <person name="Venter J.C."/>
            <person name="White O.R."/>
            <person name="Whitty B.R."/>
            <person name="Youngman P."/>
            <person name="Wolfe K.H."/>
            <person name="Goldman G.H."/>
            <person name="Wortman J.R."/>
            <person name="Jiang B."/>
            <person name="Denning D.W."/>
            <person name="Nierman W.C."/>
        </authorList>
    </citation>
    <scope>NUCLEOTIDE SEQUENCE [LARGE SCALE GENOMIC DNA]</scope>
    <source>
        <strain>ATCC 1020 / DSM 3700 / CBS 544.65 / FGSC A1164 / JCM 1740 / NRRL 181 / WB 181</strain>
    </source>
</reference>
<gene>
    <name type="primary">xgcA</name>
    <name type="ORF">NFIA_096000</name>
</gene>
<comment type="function">
    <text>Oligoxyloglucan-reducing end-specific xyloglucanase involved in degradation of xyloglucans. Releases the first two glycosyl segments from oligoxyloglucans. Active against cotton xyloglucan, tamarind xyloglucan and tamarind xyloglucan oligomers.</text>
</comment>
<comment type="catalytic activity">
    <reaction>
        <text>Hydrolysis of cellobiose from the reducing end of xyloglucans consisting of a beta-(1-&gt;4)-linked glucan carrying alpha-D-xylosyl groups on O-6 of the glucose residues. To be a substrate, the first residue must be unsubstituted, the second residue may bear a xylosyl group, whether further glycosylated or not, and the third residue, which becomes the new terminus by the action of the enzyme, is preferably xylosylated, but this xylose residue must not be further substituted.</text>
        <dbReference type="EC" id="3.2.1.150"/>
    </reaction>
</comment>
<comment type="subcellular location">
    <subcellularLocation>
        <location evidence="3">Secreted</location>
    </subcellularLocation>
</comment>
<comment type="similarity">
    <text evidence="3">Belongs to the glycosyl hydrolase 74 family.</text>
</comment>
<feature type="signal peptide" evidence="2">
    <location>
        <begin position="1"/>
        <end position="19"/>
    </location>
</feature>
<feature type="chain" id="PRO_0000394078" description="Probable oligoxyloglucan-reducing end-specific xyloglucanase">
    <location>
        <begin position="20"/>
        <end position="815"/>
    </location>
</feature>
<feature type="repeat" description="BNR 1">
    <location>
        <begin position="118"/>
        <end position="128"/>
    </location>
</feature>
<feature type="repeat" description="BNR 2">
    <location>
        <begin position="218"/>
        <end position="228"/>
    </location>
</feature>
<feature type="repeat" description="BNR 3">
    <location>
        <begin position="351"/>
        <end position="361"/>
    </location>
</feature>
<feature type="repeat" description="BNR 4">
    <location>
        <begin position="545"/>
        <end position="555"/>
    </location>
</feature>
<feature type="repeat" description="BNR 5">
    <location>
        <begin position="649"/>
        <end position="658"/>
    </location>
</feature>
<feature type="repeat" description="BNR 6">
    <location>
        <begin position="696"/>
        <end position="706"/>
    </location>
</feature>
<feature type="repeat" description="BNR 7">
    <location>
        <begin position="749"/>
        <end position="759"/>
    </location>
</feature>
<feature type="active site" description="Nucleophile" evidence="1">
    <location>
        <position position="58"/>
    </location>
</feature>
<feature type="active site" description="Proton donor" evidence="1">
    <location>
        <position position="489"/>
    </location>
</feature>
<feature type="glycosylation site" description="N-linked (GlcNAc...) asparagine" evidence="2">
    <location>
        <position position="113"/>
    </location>
</feature>
<feature type="glycosylation site" description="N-linked (GlcNAc...) asparagine" evidence="2">
    <location>
        <position position="180"/>
    </location>
</feature>
<feature type="glycosylation site" description="N-linked (GlcNAc...) asparagine" evidence="2">
    <location>
        <position position="246"/>
    </location>
</feature>
<feature type="glycosylation site" description="N-linked (GlcNAc...) asparagine" evidence="2">
    <location>
        <position position="290"/>
    </location>
</feature>
<feature type="glycosylation site" description="N-linked (GlcNAc...) asparagine" evidence="2">
    <location>
        <position position="304"/>
    </location>
</feature>
<feature type="glycosylation site" description="N-linked (GlcNAc...) asparagine" evidence="2">
    <location>
        <position position="387"/>
    </location>
</feature>
<feature type="glycosylation site" description="N-linked (GlcNAc...) asparagine" evidence="2">
    <location>
        <position position="564"/>
    </location>
</feature>
<feature type="glycosylation site" description="N-linked (GlcNAc...) asparagine" evidence="2">
    <location>
        <position position="603"/>
    </location>
</feature>
<feature type="glycosylation site" description="N-linked (GlcNAc...) asparagine" evidence="2">
    <location>
        <position position="662"/>
    </location>
</feature>
<feature type="glycosylation site" description="N-linked (GlcNAc...) asparagine" evidence="2">
    <location>
        <position position="754"/>
    </location>
</feature>